<reference key="1">
    <citation type="journal article" date="2010" name="Genome Biol. Evol.">
        <title>Continuing evolution of Burkholderia mallei through genome reduction and large-scale rearrangements.</title>
        <authorList>
            <person name="Losada L."/>
            <person name="Ronning C.M."/>
            <person name="DeShazer D."/>
            <person name="Woods D."/>
            <person name="Fedorova N."/>
            <person name="Kim H.S."/>
            <person name="Shabalina S.A."/>
            <person name="Pearson T.R."/>
            <person name="Brinkac L."/>
            <person name="Tan P."/>
            <person name="Nandi T."/>
            <person name="Crabtree J."/>
            <person name="Badger J."/>
            <person name="Beckstrom-Sternberg S."/>
            <person name="Saqib M."/>
            <person name="Schutzer S.E."/>
            <person name="Keim P."/>
            <person name="Nierman W.C."/>
        </authorList>
    </citation>
    <scope>NUCLEOTIDE SEQUENCE [LARGE SCALE GENOMIC DNA]</scope>
    <source>
        <strain>NCTC 10229</strain>
    </source>
</reference>
<evidence type="ECO:0000255" key="1">
    <source>
        <dbReference type="HAMAP-Rule" id="MF_01201"/>
    </source>
</evidence>
<dbReference type="EC" id="5.1.1.1" evidence="1"/>
<dbReference type="EMBL" id="CP000546">
    <property type="protein sequence ID" value="ABN00795.1"/>
    <property type="molecule type" value="Genomic_DNA"/>
</dbReference>
<dbReference type="RefSeq" id="WP_004191260.1">
    <property type="nucleotide sequence ID" value="NC_008836.1"/>
</dbReference>
<dbReference type="SMR" id="A2SB51"/>
<dbReference type="GeneID" id="93060719"/>
<dbReference type="KEGG" id="bml:BMA10229_A3234"/>
<dbReference type="HOGENOM" id="CLU_028393_1_0_4"/>
<dbReference type="UniPathway" id="UPA00042">
    <property type="reaction ID" value="UER00497"/>
</dbReference>
<dbReference type="Proteomes" id="UP000002283">
    <property type="component" value="Chromosome I"/>
</dbReference>
<dbReference type="GO" id="GO:0005829">
    <property type="term" value="C:cytosol"/>
    <property type="evidence" value="ECO:0007669"/>
    <property type="project" value="TreeGrafter"/>
</dbReference>
<dbReference type="GO" id="GO:0008784">
    <property type="term" value="F:alanine racemase activity"/>
    <property type="evidence" value="ECO:0007669"/>
    <property type="project" value="UniProtKB-UniRule"/>
</dbReference>
<dbReference type="GO" id="GO:0030170">
    <property type="term" value="F:pyridoxal phosphate binding"/>
    <property type="evidence" value="ECO:0007669"/>
    <property type="project" value="UniProtKB-UniRule"/>
</dbReference>
<dbReference type="GO" id="GO:0030632">
    <property type="term" value="P:D-alanine biosynthetic process"/>
    <property type="evidence" value="ECO:0007669"/>
    <property type="project" value="UniProtKB-UniRule"/>
</dbReference>
<dbReference type="CDD" id="cd06827">
    <property type="entry name" value="PLPDE_III_AR_proteobact"/>
    <property type="match status" value="1"/>
</dbReference>
<dbReference type="FunFam" id="2.40.37.10:FF:000002">
    <property type="entry name" value="Alanine racemase"/>
    <property type="match status" value="1"/>
</dbReference>
<dbReference type="FunFam" id="3.20.20.10:FF:000002">
    <property type="entry name" value="Alanine racemase"/>
    <property type="match status" value="1"/>
</dbReference>
<dbReference type="Gene3D" id="3.20.20.10">
    <property type="entry name" value="Alanine racemase"/>
    <property type="match status" value="1"/>
</dbReference>
<dbReference type="Gene3D" id="2.40.37.10">
    <property type="entry name" value="Lyase, Ornithine Decarboxylase, Chain A, domain 1"/>
    <property type="match status" value="1"/>
</dbReference>
<dbReference type="HAMAP" id="MF_01201">
    <property type="entry name" value="Ala_racemase"/>
    <property type="match status" value="1"/>
</dbReference>
<dbReference type="InterPro" id="IPR000821">
    <property type="entry name" value="Ala_racemase"/>
</dbReference>
<dbReference type="InterPro" id="IPR009006">
    <property type="entry name" value="Ala_racemase/Decarboxylase_C"/>
</dbReference>
<dbReference type="InterPro" id="IPR011079">
    <property type="entry name" value="Ala_racemase_C"/>
</dbReference>
<dbReference type="InterPro" id="IPR001608">
    <property type="entry name" value="Ala_racemase_N"/>
</dbReference>
<dbReference type="InterPro" id="IPR020622">
    <property type="entry name" value="Ala_racemase_pyridoxalP-BS"/>
</dbReference>
<dbReference type="InterPro" id="IPR029066">
    <property type="entry name" value="PLP-binding_barrel"/>
</dbReference>
<dbReference type="NCBIfam" id="TIGR00492">
    <property type="entry name" value="alr"/>
    <property type="match status" value="1"/>
</dbReference>
<dbReference type="PANTHER" id="PTHR30511">
    <property type="entry name" value="ALANINE RACEMASE"/>
    <property type="match status" value="1"/>
</dbReference>
<dbReference type="PANTHER" id="PTHR30511:SF0">
    <property type="entry name" value="ALANINE RACEMASE, CATABOLIC-RELATED"/>
    <property type="match status" value="1"/>
</dbReference>
<dbReference type="Pfam" id="PF00842">
    <property type="entry name" value="Ala_racemase_C"/>
    <property type="match status" value="1"/>
</dbReference>
<dbReference type="Pfam" id="PF01168">
    <property type="entry name" value="Ala_racemase_N"/>
    <property type="match status" value="1"/>
</dbReference>
<dbReference type="PRINTS" id="PR00992">
    <property type="entry name" value="ALARACEMASE"/>
</dbReference>
<dbReference type="SMART" id="SM01005">
    <property type="entry name" value="Ala_racemase_C"/>
    <property type="match status" value="1"/>
</dbReference>
<dbReference type="SUPFAM" id="SSF50621">
    <property type="entry name" value="Alanine racemase C-terminal domain-like"/>
    <property type="match status" value="1"/>
</dbReference>
<dbReference type="SUPFAM" id="SSF51419">
    <property type="entry name" value="PLP-binding barrel"/>
    <property type="match status" value="1"/>
</dbReference>
<dbReference type="PROSITE" id="PS00395">
    <property type="entry name" value="ALANINE_RACEMASE"/>
    <property type="match status" value="1"/>
</dbReference>
<comment type="function">
    <text evidence="1">Catalyzes the interconversion of L-alanine and D-alanine. May also act on other amino acids.</text>
</comment>
<comment type="catalytic activity">
    <reaction evidence="1">
        <text>L-alanine = D-alanine</text>
        <dbReference type="Rhea" id="RHEA:20249"/>
        <dbReference type="ChEBI" id="CHEBI:57416"/>
        <dbReference type="ChEBI" id="CHEBI:57972"/>
        <dbReference type="EC" id="5.1.1.1"/>
    </reaction>
</comment>
<comment type="cofactor">
    <cofactor evidence="1">
        <name>pyridoxal 5'-phosphate</name>
        <dbReference type="ChEBI" id="CHEBI:597326"/>
    </cofactor>
</comment>
<comment type="pathway">
    <text evidence="1">Amino-acid biosynthesis; D-alanine biosynthesis; D-alanine from L-alanine: step 1/1.</text>
</comment>
<comment type="similarity">
    <text evidence="1">Belongs to the alanine racemase family.</text>
</comment>
<name>ALR_BURM9</name>
<accession>A2SB51</accession>
<sequence length="356" mass="38334">MPRPISATIHTAALANNLSVVRRHAAQSKVWAIVKANAYGHGLARVFPGLRGTDGFGLLDLDEAVKLRELGWAGPILLLEGFFRSTDIDVIDRYSLTTAVHNDEQMRMLETARLSKPVNVQLKMNSGMNRLGYTPEKYRAAWERARACPGIGQITLMTHFSDADGERGVAEQMATFERGAQGIAGARSFANSAAVLWHPSAHFDWVRPGIMLYGASPSGRAADIADRGLKPTMTLASELIAVQTLAKGQAVGYGSMFVAEDTMRIGVVACGYADGYPRIAPEGTPVVVDGVRTRIVGRVSMDMLTVDLTPVPQAGVGARVELWGETLPIDDVAARCMTVGYELMCAVAPRVPVRAE</sequence>
<protein>
    <recommendedName>
        <fullName evidence="1">Alanine racemase</fullName>
        <ecNumber evidence="1">5.1.1.1</ecNumber>
    </recommendedName>
</protein>
<gene>
    <name type="primary">alr</name>
    <name type="ordered locus">BMA10229_A3234</name>
</gene>
<keyword id="KW-0413">Isomerase</keyword>
<keyword id="KW-0663">Pyridoxal phosphate</keyword>
<organism>
    <name type="scientific">Burkholderia mallei (strain NCTC 10229)</name>
    <dbReference type="NCBI Taxonomy" id="412022"/>
    <lineage>
        <taxon>Bacteria</taxon>
        <taxon>Pseudomonadati</taxon>
        <taxon>Pseudomonadota</taxon>
        <taxon>Betaproteobacteria</taxon>
        <taxon>Burkholderiales</taxon>
        <taxon>Burkholderiaceae</taxon>
        <taxon>Burkholderia</taxon>
        <taxon>pseudomallei group</taxon>
    </lineage>
</organism>
<proteinExistence type="inferred from homology"/>
<feature type="chain" id="PRO_1000065975" description="Alanine racemase">
    <location>
        <begin position="1"/>
        <end position="356"/>
    </location>
</feature>
<feature type="active site" description="Proton acceptor; specific for D-alanine" evidence="1">
    <location>
        <position position="35"/>
    </location>
</feature>
<feature type="active site" description="Proton acceptor; specific for L-alanine" evidence="1">
    <location>
        <position position="253"/>
    </location>
</feature>
<feature type="binding site" evidence="1">
    <location>
        <position position="130"/>
    </location>
    <ligand>
        <name>substrate</name>
    </ligand>
</feature>
<feature type="binding site" evidence="1">
    <location>
        <position position="301"/>
    </location>
    <ligand>
        <name>substrate</name>
    </ligand>
</feature>
<feature type="modified residue" description="N6-(pyridoxal phosphate)lysine" evidence="1">
    <location>
        <position position="35"/>
    </location>
</feature>